<reference key="1">
    <citation type="journal article" date="1997" name="Nature">
        <title>The nucleotide sequence of Saccharomyces cerevisiae chromosome XVI.</title>
        <authorList>
            <person name="Bussey H."/>
            <person name="Storms R.K."/>
            <person name="Ahmed A."/>
            <person name="Albermann K."/>
            <person name="Allen E."/>
            <person name="Ansorge W."/>
            <person name="Araujo R."/>
            <person name="Aparicio A."/>
            <person name="Barrell B.G."/>
            <person name="Badcock K."/>
            <person name="Benes V."/>
            <person name="Botstein D."/>
            <person name="Bowman S."/>
            <person name="Brueckner M."/>
            <person name="Carpenter J."/>
            <person name="Cherry J.M."/>
            <person name="Chung E."/>
            <person name="Churcher C.M."/>
            <person name="Coster F."/>
            <person name="Davis K."/>
            <person name="Davis R.W."/>
            <person name="Dietrich F.S."/>
            <person name="Delius H."/>
            <person name="DiPaolo T."/>
            <person name="Dubois E."/>
            <person name="Duesterhoeft A."/>
            <person name="Duncan M."/>
            <person name="Floeth M."/>
            <person name="Fortin N."/>
            <person name="Friesen J.D."/>
            <person name="Fritz C."/>
            <person name="Goffeau A."/>
            <person name="Hall J."/>
            <person name="Hebling U."/>
            <person name="Heumann K."/>
            <person name="Hilbert H."/>
            <person name="Hillier L.W."/>
            <person name="Hunicke-Smith S."/>
            <person name="Hyman R.W."/>
            <person name="Johnston M."/>
            <person name="Kalman S."/>
            <person name="Kleine K."/>
            <person name="Komp C."/>
            <person name="Kurdi O."/>
            <person name="Lashkari D."/>
            <person name="Lew H."/>
            <person name="Lin A."/>
            <person name="Lin D."/>
            <person name="Louis E.J."/>
            <person name="Marathe R."/>
            <person name="Messenguy F."/>
            <person name="Mewes H.-W."/>
            <person name="Mirtipati S."/>
            <person name="Moestl D."/>
            <person name="Mueller-Auer S."/>
            <person name="Namath A."/>
            <person name="Nentwich U."/>
            <person name="Oefner P."/>
            <person name="Pearson D."/>
            <person name="Petel F.X."/>
            <person name="Pohl T.M."/>
            <person name="Purnelle B."/>
            <person name="Rajandream M.A."/>
            <person name="Rechmann S."/>
            <person name="Rieger M."/>
            <person name="Riles L."/>
            <person name="Roberts D."/>
            <person name="Schaefer M."/>
            <person name="Scharfe M."/>
            <person name="Scherens B."/>
            <person name="Schramm S."/>
            <person name="Schroeder M."/>
            <person name="Sdicu A.-M."/>
            <person name="Tettelin H."/>
            <person name="Urrestarazu L.A."/>
            <person name="Ushinsky S."/>
            <person name="Vierendeels F."/>
            <person name="Vissers S."/>
            <person name="Voss H."/>
            <person name="Walsh S.V."/>
            <person name="Wambutt R."/>
            <person name="Wang Y."/>
            <person name="Wedler E."/>
            <person name="Wedler H."/>
            <person name="Winnett E."/>
            <person name="Zhong W.-W."/>
            <person name="Zollner A."/>
            <person name="Vo D.H."/>
            <person name="Hani J."/>
        </authorList>
    </citation>
    <scope>NUCLEOTIDE SEQUENCE [LARGE SCALE GENOMIC DNA]</scope>
    <source>
        <strain>ATCC 204508 / S288c</strain>
    </source>
</reference>
<reference key="2">
    <citation type="journal article" date="2014" name="G3 (Bethesda)">
        <title>The reference genome sequence of Saccharomyces cerevisiae: Then and now.</title>
        <authorList>
            <person name="Engel S.R."/>
            <person name="Dietrich F.S."/>
            <person name="Fisk D.G."/>
            <person name="Binkley G."/>
            <person name="Balakrishnan R."/>
            <person name="Costanzo M.C."/>
            <person name="Dwight S.S."/>
            <person name="Hitz B.C."/>
            <person name="Karra K."/>
            <person name="Nash R.S."/>
            <person name="Weng S."/>
            <person name="Wong E.D."/>
            <person name="Lloyd P."/>
            <person name="Skrzypek M.S."/>
            <person name="Miyasato S.R."/>
            <person name="Simison M."/>
            <person name="Cherry J.M."/>
        </authorList>
    </citation>
    <scope>GENOME REANNOTATION</scope>
    <source>
        <strain>ATCC 204508 / S288c</strain>
    </source>
</reference>
<reference key="3">
    <citation type="journal article" date="2007" name="Genome Res.">
        <title>Approaching a complete repository of sequence-verified protein-encoding clones for Saccharomyces cerevisiae.</title>
        <authorList>
            <person name="Hu Y."/>
            <person name="Rolfs A."/>
            <person name="Bhullar B."/>
            <person name="Murthy T.V.S."/>
            <person name="Zhu C."/>
            <person name="Berger M.F."/>
            <person name="Camargo A.A."/>
            <person name="Kelley F."/>
            <person name="McCarron S."/>
            <person name="Jepson D."/>
            <person name="Richardson A."/>
            <person name="Raphael J."/>
            <person name="Moreira D."/>
            <person name="Taycher E."/>
            <person name="Zuo D."/>
            <person name="Mohr S."/>
            <person name="Kane M.F."/>
            <person name="Williamson J."/>
            <person name="Simpson A.J.G."/>
            <person name="Bulyk M.L."/>
            <person name="Harlow E."/>
            <person name="Marsischky G."/>
            <person name="Kolodner R.D."/>
            <person name="LaBaer J."/>
        </authorList>
    </citation>
    <scope>NUCLEOTIDE SEQUENCE [GENOMIC DNA]</scope>
    <source>
        <strain>ATCC 204508 / S288c</strain>
    </source>
</reference>
<reference key="4">
    <citation type="journal article" date="1997" name="Yeast">
        <title>Characterization of new proteins found by analysis of short open reading frames from the full yeast genome.</title>
        <authorList>
            <person name="Andrade M.A."/>
            <person name="Daruvar A."/>
            <person name="Casari G."/>
            <person name="Schneider R."/>
            <person name="Termier M."/>
            <person name="Sander C."/>
        </authorList>
    </citation>
    <scope>PREDICTION OF FUNCTION</scope>
</reference>
<reference key="5">
    <citation type="journal article" date="2003" name="Nature">
        <title>Global analysis of protein localization in budding yeast.</title>
        <authorList>
            <person name="Huh W.-K."/>
            <person name="Falvo J.V."/>
            <person name="Gerke L.C."/>
            <person name="Carroll A.S."/>
            <person name="Howson R.W."/>
            <person name="Weissman J.S."/>
            <person name="O'Shea E.K."/>
        </authorList>
    </citation>
    <scope>SUBCELLULAR LOCATION [LARGE SCALE ANALYSIS]</scope>
</reference>
<reference key="6">
    <citation type="journal article" date="2003" name="Nature">
        <title>Global analysis of protein expression in yeast.</title>
        <authorList>
            <person name="Ghaemmaghami S."/>
            <person name="Huh W.-K."/>
            <person name="Bower K."/>
            <person name="Howson R.W."/>
            <person name="Belle A."/>
            <person name="Dephoure N."/>
            <person name="O'Shea E.K."/>
            <person name="Weissman J.S."/>
        </authorList>
    </citation>
    <scope>LEVEL OF PROTEIN EXPRESSION [LARGE SCALE ANALYSIS]</scope>
</reference>
<reference key="7">
    <citation type="journal article" date="2008" name="Genetics">
        <title>A genomewide suppressor and enhancer analysis of cdc13-1 reveals varied cellular processes influencing telomere capping in Saccharomyces cerevisiae.</title>
        <authorList>
            <person name="Addinall S.G."/>
            <person name="Downey M."/>
            <person name="Yu M."/>
            <person name="Zubko M.K."/>
            <person name="Dewar J."/>
            <person name="Leake A."/>
            <person name="Hallinan J."/>
            <person name="Shaw O."/>
            <person name="James K."/>
            <person name="Wilkinson D.J."/>
            <person name="Wipat A."/>
            <person name="Durocher D."/>
            <person name="Lydall D."/>
        </authorList>
    </citation>
    <scope>FUNCTION</scope>
</reference>
<reference key="8">
    <citation type="journal article" date="2010" name="BMC Chem. Biol.">
        <title>Chemical-genetic profile analysis of five inhibitory compounds in yeast.</title>
        <authorList>
            <person name="Alamgir M."/>
            <person name="Erukova V."/>
            <person name="Jessulat M."/>
            <person name="Azizi A."/>
            <person name="Golshani A."/>
        </authorList>
    </citation>
    <scope>FUNCTION</scope>
</reference>
<reference key="9">
    <citation type="journal article" date="2015" name="Nat. Commun.">
        <title>Organization of the mitochondrial translation machinery studied in situ by cryoelectron tomography.</title>
        <authorList>
            <person name="Pfeffer S."/>
            <person name="Woellhaf M.W."/>
            <person name="Herrmann J.M."/>
            <person name="Forster F."/>
        </authorList>
    </citation>
    <scope>SUBCELLULAR LOCATION</scope>
</reference>
<reference key="10">
    <citation type="journal article" date="2014" name="Science">
        <title>Structure of the yeast mitochondrial large ribosomal subunit.</title>
        <authorList>
            <person name="Amunts A."/>
            <person name="Brown A."/>
            <person name="Bai X.C."/>
            <person name="Llacer J.L."/>
            <person name="Hussain T."/>
            <person name="Emsley P."/>
            <person name="Long F."/>
            <person name="Murshudov G."/>
            <person name="Scheres S.H."/>
            <person name="Ramakrishnan V."/>
        </authorList>
    </citation>
    <scope>STRUCTURE BY ELECTRON MICROSCOPY (3.20 ANGSTROMS)</scope>
    <scope>SUBUNIT</scope>
</reference>
<evidence type="ECO:0000255" key="1"/>
<evidence type="ECO:0000269" key="2">
    <source>
    </source>
</evidence>
<evidence type="ECO:0000269" key="3">
    <source>
    </source>
</evidence>
<evidence type="ECO:0000269" key="4">
    <source>
    </source>
</evidence>
<evidence type="ECO:0000269" key="5">
    <source>
    </source>
</evidence>
<evidence type="ECO:0000269" key="6">
    <source>
    </source>
</evidence>
<evidence type="ECO:0000269" key="7">
    <source>
    </source>
</evidence>
<evidence type="ECO:0000303" key="8">
    <source>
    </source>
</evidence>
<evidence type="ECO:0000305" key="9"/>
<evidence type="ECO:0000305" key="10">
    <source>
    </source>
</evidence>
<evidence type="ECO:0000305" key="11">
    <source>
    </source>
</evidence>
<sequence>MFLQTLRLTMPRMFLHMKPSPITITRACTVPSLLSVAAPQPALVAANRPLVFNRGFKVRTSVKKFCSDCYLVRRKGRVYIYCKSNKKHKQRQG</sequence>
<accession>O14464</accession>
<accession>D6W3I5</accession>
<dbReference type="EMBL" id="Z73540">
    <property type="protein sequence ID" value="CAA97895.1"/>
    <property type="molecule type" value="Genomic_DNA"/>
</dbReference>
<dbReference type="EMBL" id="Z73539">
    <property type="protein sequence ID" value="CAA97893.1"/>
    <property type="molecule type" value="Genomic_DNA"/>
</dbReference>
<dbReference type="EMBL" id="AY558522">
    <property type="protein sequence ID" value="AAS56848.1"/>
    <property type="molecule type" value="Genomic_DNA"/>
</dbReference>
<dbReference type="EMBL" id="BK006949">
    <property type="protein sequence ID" value="DAA11251.1"/>
    <property type="molecule type" value="Genomic_DNA"/>
</dbReference>
<dbReference type="PIR" id="S72254">
    <property type="entry name" value="S72254"/>
</dbReference>
<dbReference type="RefSeq" id="NP_015141.1">
    <property type="nucleotide sequence ID" value="NM_001184317.1"/>
</dbReference>
<dbReference type="PDB" id="3J6B">
    <property type="method" value="EM"/>
    <property type="resolution" value="3.20 A"/>
    <property type="chains" value="0=1-93"/>
</dbReference>
<dbReference type="PDB" id="5MRC">
    <property type="method" value="EM"/>
    <property type="resolution" value="3.25 A"/>
    <property type="chains" value="0=56-93"/>
</dbReference>
<dbReference type="PDB" id="5MRE">
    <property type="method" value="EM"/>
    <property type="resolution" value="3.75 A"/>
    <property type="chains" value="0=56-93"/>
</dbReference>
<dbReference type="PDB" id="5MRF">
    <property type="method" value="EM"/>
    <property type="resolution" value="4.97 A"/>
    <property type="chains" value="0=56-93"/>
</dbReference>
<dbReference type="PDBsum" id="3J6B"/>
<dbReference type="PDBsum" id="5MRC"/>
<dbReference type="PDBsum" id="5MRE"/>
<dbReference type="PDBsum" id="5MRF"/>
<dbReference type="EMDB" id="EMD-3551"/>
<dbReference type="EMDB" id="EMD-3552"/>
<dbReference type="EMDB" id="EMD-3553"/>
<dbReference type="SMR" id="O14464"/>
<dbReference type="BioGRID" id="35999">
    <property type="interactions" value="279"/>
</dbReference>
<dbReference type="ComplexPortal" id="CPX-1602">
    <property type="entry name" value="54S mitochondrial large ribosomal subunit"/>
</dbReference>
<dbReference type="DIP" id="DIP-6800N"/>
<dbReference type="FunCoup" id="O14464">
    <property type="interactions" value="340"/>
</dbReference>
<dbReference type="IntAct" id="O14464">
    <property type="interactions" value="8"/>
</dbReference>
<dbReference type="STRING" id="4932.YPL183W-A"/>
<dbReference type="PaxDb" id="4932-YPL183W-A"/>
<dbReference type="PeptideAtlas" id="O14464"/>
<dbReference type="EnsemblFungi" id="YPL183W-A_mRNA">
    <property type="protein sequence ID" value="YPL183W-A"/>
    <property type="gene ID" value="YPL183W-A"/>
</dbReference>
<dbReference type="GeneID" id="855918"/>
<dbReference type="KEGG" id="sce:YPL183W-A"/>
<dbReference type="AGR" id="SGD:S000007224"/>
<dbReference type="SGD" id="S000007224">
    <property type="gene designation" value="RTC6"/>
</dbReference>
<dbReference type="VEuPathDB" id="FungiDB:YPL183W-A"/>
<dbReference type="eggNOG" id="KOG4122">
    <property type="taxonomic scope" value="Eukaryota"/>
</dbReference>
<dbReference type="HOGENOM" id="CLU_135723_1_2_1"/>
<dbReference type="InParanoid" id="O14464"/>
<dbReference type="OrthoDB" id="10265903at2759"/>
<dbReference type="BioCyc" id="YEAST:G3O-34348-MONOMER"/>
<dbReference type="BioGRID-ORCS" id="855918">
    <property type="hits" value="7 hits in 10 CRISPR screens"/>
</dbReference>
<dbReference type="PRO" id="PR:O14464"/>
<dbReference type="Proteomes" id="UP000002311">
    <property type="component" value="Chromosome XVI"/>
</dbReference>
<dbReference type="RNAct" id="O14464">
    <property type="molecule type" value="protein"/>
</dbReference>
<dbReference type="GO" id="GO:0005743">
    <property type="term" value="C:mitochondrial inner membrane"/>
    <property type="evidence" value="ECO:0000303"/>
    <property type="project" value="ComplexPortal"/>
</dbReference>
<dbReference type="GO" id="GO:0005762">
    <property type="term" value="C:mitochondrial large ribosomal subunit"/>
    <property type="evidence" value="ECO:0000247"/>
    <property type="project" value="SGD"/>
</dbReference>
<dbReference type="GO" id="GO:0003735">
    <property type="term" value="F:structural constituent of ribosome"/>
    <property type="evidence" value="ECO:0000247"/>
    <property type="project" value="SGD"/>
</dbReference>
<dbReference type="GO" id="GO:0008270">
    <property type="term" value="F:zinc ion binding"/>
    <property type="evidence" value="ECO:0000314"/>
    <property type="project" value="SGD"/>
</dbReference>
<dbReference type="GO" id="GO:0032543">
    <property type="term" value="P:mitochondrial translation"/>
    <property type="evidence" value="ECO:0000247"/>
    <property type="project" value="SGD"/>
</dbReference>
<dbReference type="GO" id="GO:0042254">
    <property type="term" value="P:ribosome biogenesis"/>
    <property type="evidence" value="ECO:0000315"/>
    <property type="project" value="SGD"/>
</dbReference>
<dbReference type="HAMAP" id="MF_00251">
    <property type="entry name" value="Ribosomal_bL36"/>
    <property type="match status" value="1"/>
</dbReference>
<dbReference type="InterPro" id="IPR052143">
    <property type="entry name" value="Mitoribosomal_bL36m"/>
</dbReference>
<dbReference type="InterPro" id="IPR000473">
    <property type="entry name" value="Ribosomal_bL36"/>
</dbReference>
<dbReference type="InterPro" id="IPR035977">
    <property type="entry name" value="Ribosomal_bL36_sp"/>
</dbReference>
<dbReference type="NCBIfam" id="TIGR01022">
    <property type="entry name" value="rpmJ_bact"/>
    <property type="match status" value="1"/>
</dbReference>
<dbReference type="PANTHER" id="PTHR46909">
    <property type="entry name" value="39S RIBOSOMAL PROTEIN L36, MITOCHONDRIAL"/>
    <property type="match status" value="1"/>
</dbReference>
<dbReference type="PANTHER" id="PTHR46909:SF1">
    <property type="entry name" value="LARGE RIBOSOMAL SUBUNIT PROTEIN BL36M"/>
    <property type="match status" value="1"/>
</dbReference>
<dbReference type="Pfam" id="PF00444">
    <property type="entry name" value="Ribosomal_L36"/>
    <property type="match status" value="1"/>
</dbReference>
<dbReference type="SUPFAM" id="SSF57840">
    <property type="entry name" value="Ribosomal protein L36"/>
    <property type="match status" value="1"/>
</dbReference>
<dbReference type="PROSITE" id="PS00828">
    <property type="entry name" value="RIBOSOMAL_L36"/>
    <property type="match status" value="1"/>
</dbReference>
<feature type="transit peptide" description="Mitochondrion" evidence="1">
    <location>
        <begin position="1"/>
        <end position="35"/>
    </location>
</feature>
<feature type="chain" id="PRO_0000030531" description="Large ribosomal subunit protein bL36m">
    <location>
        <begin position="36"/>
        <end position="93"/>
    </location>
</feature>
<gene>
    <name type="primary">RTC6</name>
    <name type="synonym">TAE4</name>
    <name type="ordered locus">YPL183W-A</name>
    <name type="ORF">YPL183BW</name>
</gene>
<name>RTC6_YEAST</name>
<organism>
    <name type="scientific">Saccharomyces cerevisiae (strain ATCC 204508 / S288c)</name>
    <name type="common">Baker's yeast</name>
    <dbReference type="NCBI Taxonomy" id="559292"/>
    <lineage>
        <taxon>Eukaryota</taxon>
        <taxon>Fungi</taxon>
        <taxon>Dikarya</taxon>
        <taxon>Ascomycota</taxon>
        <taxon>Saccharomycotina</taxon>
        <taxon>Saccharomycetes</taxon>
        <taxon>Saccharomycetales</taxon>
        <taxon>Saccharomycetaceae</taxon>
        <taxon>Saccharomyces</taxon>
    </lineage>
</organism>
<proteinExistence type="evidence at protein level"/>
<comment type="function">
    <text evidence="4 5 10 11">Component of the mitochondrial ribosome (mitoribosome), a dedicated translation machinery responsible for the synthesis of mitochondrial genome-encoded proteins, including at least some of the essential transmembrane subunits of the mitochondrial respiratory chain. The mitoribosomes are attached to the mitochondrial inner membrane and translation products are cotranslationally integrated into the membrane (PubMed:24675956, PubMed:25609543). bL36m may be involved in a process influencing telomere capping (PubMed:18845848, PubMed:20691087).</text>
</comment>
<comment type="subunit">
    <text evidence="6">Component of the mitochondrial large ribosomal subunit (mt-LSU). Mature yeast 74S mitochondrial ribosomes consist of a small (37S) and a large (54S) subunit. The 37S small subunit contains a 15S ribosomal RNA (15S mt-rRNA) and 34 different proteins. The 54S large subunit contains a 21S rRNA (21S mt-rRNA) and 46 different proteins. bL36m has a zinc binding site.</text>
</comment>
<comment type="subcellular location">
    <subcellularLocation>
        <location evidence="2">Mitochondrion</location>
    </subcellularLocation>
    <text evidence="7">Mitoribosomes are tethered to the mitochondrial inner membrane and spatially aligned with the membrane insertion machinery through two distinct membrane contact sites, formed by the 21S rRNA expansion segment 96-ES1 and the inner membrane protein MBA1.</text>
</comment>
<comment type="miscellaneous">
    <text evidence="3">Present with 500 molecules/cell in log phase SD medium.</text>
</comment>
<comment type="similarity">
    <text evidence="9">Belongs to the bacterial ribosomal protein bL36 family.</text>
</comment>
<keyword id="KW-0002">3D-structure</keyword>
<keyword id="KW-0496">Mitochondrion</keyword>
<keyword id="KW-1185">Reference proteome</keyword>
<keyword id="KW-0687">Ribonucleoprotein</keyword>
<keyword id="KW-0689">Ribosomal protein</keyword>
<keyword id="KW-0809">Transit peptide</keyword>
<protein>
    <recommendedName>
        <fullName evidence="8">Large ribosomal subunit protein bL36m</fullName>
    </recommendedName>
    <alternativeName>
        <fullName>54S ribosomal protein RTC6, mitochondrial</fullName>
    </alternativeName>
    <alternativeName>
        <fullName>Restriction of telomere capping protein 6</fullName>
    </alternativeName>
    <alternativeName>
        <fullName>Translation associated element 4</fullName>
    </alternativeName>
</protein>